<dbReference type="EMBL" id="AM946015">
    <property type="protein sequence ID" value="CAR41201.1"/>
    <property type="molecule type" value="Genomic_DNA"/>
</dbReference>
<dbReference type="RefSeq" id="WP_012658019.1">
    <property type="nucleotide sequence ID" value="NC_012004.1"/>
</dbReference>
<dbReference type="SMR" id="B9DRF4"/>
<dbReference type="STRING" id="218495.SUB0487"/>
<dbReference type="KEGG" id="sub:SUB0487"/>
<dbReference type="eggNOG" id="COG4479">
    <property type="taxonomic scope" value="Bacteria"/>
</dbReference>
<dbReference type="HOGENOM" id="CLU_177534_1_0_9"/>
<dbReference type="OrthoDB" id="2242851at2"/>
<dbReference type="Proteomes" id="UP000000449">
    <property type="component" value="Chromosome"/>
</dbReference>
<dbReference type="Gene3D" id="1.10.150.260">
    <property type="entry name" value="YozE SAM-like"/>
    <property type="match status" value="1"/>
</dbReference>
<dbReference type="HAMAP" id="MF_01538">
    <property type="entry name" value="UPF0346"/>
    <property type="match status" value="1"/>
</dbReference>
<dbReference type="InterPro" id="IPR010673">
    <property type="entry name" value="UPF0346"/>
</dbReference>
<dbReference type="InterPro" id="IPR023089">
    <property type="entry name" value="YozE_SAM-like"/>
</dbReference>
<dbReference type="InterPro" id="IPR036806">
    <property type="entry name" value="YozE_SAM-like_sf"/>
</dbReference>
<dbReference type="NCBIfam" id="NF010193">
    <property type="entry name" value="PRK13672.1"/>
    <property type="match status" value="1"/>
</dbReference>
<dbReference type="Pfam" id="PF06855">
    <property type="entry name" value="YozE_SAM_like"/>
    <property type="match status" value="1"/>
</dbReference>
<dbReference type="PIRSF" id="PIRSF037262">
    <property type="entry name" value="UCP037262"/>
    <property type="match status" value="1"/>
</dbReference>
<dbReference type="SUPFAM" id="SSF140652">
    <property type="entry name" value="YozE-like"/>
    <property type="match status" value="1"/>
</dbReference>
<gene>
    <name type="ordered locus">SUB0487</name>
</gene>
<name>Y487_STRU0</name>
<sequence>MRKSFYSWLMTQRNPKSDEPVAILADLAFDDTTFPKHSDDFEVISRYLEDQAIFSFNLGHFDAIWEDYLNH</sequence>
<protein>
    <recommendedName>
        <fullName evidence="1">UPF0346 protein SUB0487</fullName>
    </recommendedName>
</protein>
<keyword id="KW-1185">Reference proteome</keyword>
<feature type="chain" id="PRO_1000185208" description="UPF0346 protein SUB0487">
    <location>
        <begin position="1"/>
        <end position="71"/>
    </location>
</feature>
<reference key="1">
    <citation type="journal article" date="2009" name="BMC Genomics">
        <title>Evidence for niche adaptation in the genome of the bovine pathogen Streptococcus uberis.</title>
        <authorList>
            <person name="Ward P.N."/>
            <person name="Holden M.T.G."/>
            <person name="Leigh J.A."/>
            <person name="Lennard N."/>
            <person name="Bignell A."/>
            <person name="Barron A."/>
            <person name="Clark L."/>
            <person name="Quail M.A."/>
            <person name="Woodward J."/>
            <person name="Barrell B.G."/>
            <person name="Egan S.A."/>
            <person name="Field T.R."/>
            <person name="Maskell D."/>
            <person name="Kehoe M."/>
            <person name="Dowson C.G."/>
            <person name="Chanter N."/>
            <person name="Whatmore A.M."/>
            <person name="Bentley S.D."/>
            <person name="Parkhill J."/>
        </authorList>
    </citation>
    <scope>NUCLEOTIDE SEQUENCE [LARGE SCALE GENOMIC DNA]</scope>
    <source>
        <strain>ATCC BAA-854 / 0140J</strain>
    </source>
</reference>
<comment type="similarity">
    <text evidence="1">Belongs to the UPF0346 family.</text>
</comment>
<organism>
    <name type="scientific">Streptococcus uberis (strain ATCC BAA-854 / 0140J)</name>
    <dbReference type="NCBI Taxonomy" id="218495"/>
    <lineage>
        <taxon>Bacteria</taxon>
        <taxon>Bacillati</taxon>
        <taxon>Bacillota</taxon>
        <taxon>Bacilli</taxon>
        <taxon>Lactobacillales</taxon>
        <taxon>Streptococcaceae</taxon>
        <taxon>Streptococcus</taxon>
    </lineage>
</organism>
<proteinExistence type="inferred from homology"/>
<accession>B9DRF4</accession>
<evidence type="ECO:0000255" key="1">
    <source>
        <dbReference type="HAMAP-Rule" id="MF_01538"/>
    </source>
</evidence>